<comment type="function">
    <text evidence="1">Potentially involved in chemo- or phototactic signal transduction.</text>
</comment>
<comment type="subcellular location">
    <subcellularLocation>
        <location evidence="6">Cell membrane</location>
        <topology evidence="6">Multi-pass membrane protein</topology>
    </subcellularLocation>
</comment>
<comment type="PTM">
    <text evidence="1">Methylated by CheR.</text>
</comment>
<comment type="similarity">
    <text evidence="6">Belongs to the methyl-accepting chemotaxis (MCP) protein family.</text>
</comment>
<name>HTR4_HALSA</name>
<organism>
    <name type="scientific">Halobacterium salinarum (strain ATCC 700922 / JCM 11081 / NRC-1)</name>
    <name type="common">Halobacterium halobium</name>
    <dbReference type="NCBI Taxonomy" id="64091"/>
    <lineage>
        <taxon>Archaea</taxon>
        <taxon>Methanobacteriati</taxon>
        <taxon>Methanobacteriota</taxon>
        <taxon>Stenosarchaea group</taxon>
        <taxon>Halobacteria</taxon>
        <taxon>Halobacteriales</taxon>
        <taxon>Halobacteriaceae</taxon>
        <taxon>Halobacterium</taxon>
        <taxon>Halobacterium salinarum NRC-34001</taxon>
    </lineage>
</organism>
<proteinExistence type="inferred from homology"/>
<gene>
    <name type="primary">htr4</name>
    <name type="synonym">htpVI</name>
    <name type="ordered locus">VNG_0806G</name>
</gene>
<feature type="chain" id="PRO_0000110553" description="Transducer protein Htr4">
    <location>
        <begin position="1"/>
        <end position="778"/>
    </location>
</feature>
<feature type="topological domain" description="Cytoplasmic" evidence="2">
    <location>
        <begin position="1"/>
        <end position="26"/>
    </location>
</feature>
<feature type="transmembrane region" description="Helical" evidence="2">
    <location>
        <begin position="27"/>
        <end position="47"/>
    </location>
</feature>
<feature type="topological domain" description="Extracellular" evidence="2">
    <location>
        <begin position="48"/>
        <end position="296"/>
    </location>
</feature>
<feature type="transmembrane region" description="Helical" evidence="2">
    <location>
        <begin position="297"/>
        <end position="317"/>
    </location>
</feature>
<feature type="topological domain" description="Cytoplasmic" evidence="2">
    <location>
        <begin position="318"/>
        <end position="778"/>
    </location>
</feature>
<feature type="domain" description="HAMP 1" evidence="3">
    <location>
        <begin position="318"/>
        <end position="370"/>
    </location>
</feature>
<feature type="domain" description="HAMP 2" evidence="3">
    <location>
        <begin position="412"/>
        <end position="465"/>
    </location>
</feature>
<feature type="domain" description="Methyl-accepting transducer" evidence="4">
    <location>
        <begin position="484"/>
        <end position="720"/>
    </location>
</feature>
<feature type="region of interest" description="Disordered" evidence="5">
    <location>
        <begin position="376"/>
        <end position="411"/>
    </location>
</feature>
<feature type="compositionally biased region" description="Low complexity" evidence="5">
    <location>
        <begin position="387"/>
        <end position="400"/>
    </location>
</feature>
<feature type="compositionally biased region" description="Basic and acidic residues" evidence="5">
    <location>
        <begin position="401"/>
        <end position="411"/>
    </location>
</feature>
<feature type="modified residue" description="Glutamate methyl ester (Glu)" evidence="1">
    <location>
        <position position="522"/>
    </location>
</feature>
<feature type="modified residue" description="Glutamate methyl ester (Glu)" evidence="1">
    <location>
        <position position="739"/>
    </location>
</feature>
<protein>
    <recommendedName>
        <fullName>Transducer protein Htr4</fullName>
    </recommendedName>
    <alternativeName>
        <fullName>HTP VI</fullName>
    </alternativeName>
</protein>
<keyword id="KW-1003">Cell membrane</keyword>
<keyword id="KW-0145">Chemotaxis</keyword>
<keyword id="KW-0472">Membrane</keyword>
<keyword id="KW-0488">Methylation</keyword>
<keyword id="KW-1185">Reference proteome</keyword>
<keyword id="KW-0677">Repeat</keyword>
<keyword id="KW-0807">Transducer</keyword>
<keyword id="KW-0812">Transmembrane</keyword>
<keyword id="KW-1133">Transmembrane helix</keyword>
<accession>P0DMI4</accession>
<accession>Q48319</accession>
<accession>Q9HR92</accession>
<evidence type="ECO:0000250" key="1"/>
<evidence type="ECO:0000255" key="2"/>
<evidence type="ECO:0000255" key="3">
    <source>
        <dbReference type="PROSITE-ProRule" id="PRU00102"/>
    </source>
</evidence>
<evidence type="ECO:0000255" key="4">
    <source>
        <dbReference type="PROSITE-ProRule" id="PRU00284"/>
    </source>
</evidence>
<evidence type="ECO:0000256" key="5">
    <source>
        <dbReference type="SAM" id="MobiDB-lite"/>
    </source>
</evidence>
<evidence type="ECO:0000305" key="6"/>
<dbReference type="EMBL" id="AE004437">
    <property type="protein sequence ID" value="AAG19266.1"/>
    <property type="molecule type" value="Genomic_DNA"/>
</dbReference>
<dbReference type="PIR" id="F84237">
    <property type="entry name" value="F84237"/>
</dbReference>
<dbReference type="RefSeq" id="WP_010902562.1">
    <property type="nucleotide sequence ID" value="NC_002607.1"/>
</dbReference>
<dbReference type="SMR" id="P0DMI4"/>
<dbReference type="STRING" id="64091.VNG_0806G"/>
<dbReference type="PaxDb" id="64091-VNG_0806G"/>
<dbReference type="GeneID" id="68693648"/>
<dbReference type="KEGG" id="hal:VNG_0806G"/>
<dbReference type="PATRIC" id="fig|64091.14.peg.618"/>
<dbReference type="HOGENOM" id="CLU_000445_107_19_2"/>
<dbReference type="InParanoid" id="P0DMI4"/>
<dbReference type="OrthoDB" id="8523at2157"/>
<dbReference type="PhylomeDB" id="P0DMI4"/>
<dbReference type="Proteomes" id="UP000000554">
    <property type="component" value="Chromosome"/>
</dbReference>
<dbReference type="GO" id="GO:0005886">
    <property type="term" value="C:plasma membrane"/>
    <property type="evidence" value="ECO:0007669"/>
    <property type="project" value="UniProtKB-SubCell"/>
</dbReference>
<dbReference type="GO" id="GO:0004888">
    <property type="term" value="F:transmembrane signaling receptor activity"/>
    <property type="evidence" value="ECO:0007669"/>
    <property type="project" value="InterPro"/>
</dbReference>
<dbReference type="GO" id="GO:0006935">
    <property type="term" value="P:chemotaxis"/>
    <property type="evidence" value="ECO:0000318"/>
    <property type="project" value="GO_Central"/>
</dbReference>
<dbReference type="GO" id="GO:0007165">
    <property type="term" value="P:signal transduction"/>
    <property type="evidence" value="ECO:0007669"/>
    <property type="project" value="UniProtKB-KW"/>
</dbReference>
<dbReference type="CDD" id="cd06225">
    <property type="entry name" value="HAMP"/>
    <property type="match status" value="1"/>
</dbReference>
<dbReference type="CDD" id="cd11386">
    <property type="entry name" value="MCP_signal"/>
    <property type="match status" value="1"/>
</dbReference>
<dbReference type="Gene3D" id="6.10.250.1910">
    <property type="match status" value="1"/>
</dbReference>
<dbReference type="Gene3D" id="1.10.287.950">
    <property type="entry name" value="Methyl-accepting chemotaxis protein"/>
    <property type="match status" value="1"/>
</dbReference>
<dbReference type="Gene3D" id="3.30.450.20">
    <property type="entry name" value="PAS domain"/>
    <property type="match status" value="2"/>
</dbReference>
<dbReference type="InterPro" id="IPR004090">
    <property type="entry name" value="Chemotax_Me-accpt_rcpt"/>
</dbReference>
<dbReference type="InterPro" id="IPR003660">
    <property type="entry name" value="HAMP_dom"/>
</dbReference>
<dbReference type="InterPro" id="IPR004089">
    <property type="entry name" value="MCPsignal_dom"/>
</dbReference>
<dbReference type="PANTHER" id="PTHR32089:SF112">
    <property type="entry name" value="LYSOZYME-LIKE PROTEIN-RELATED"/>
    <property type="match status" value="1"/>
</dbReference>
<dbReference type="PANTHER" id="PTHR32089">
    <property type="entry name" value="METHYL-ACCEPTING CHEMOTAXIS PROTEIN MCPB"/>
    <property type="match status" value="1"/>
</dbReference>
<dbReference type="Pfam" id="PF00672">
    <property type="entry name" value="HAMP"/>
    <property type="match status" value="1"/>
</dbReference>
<dbReference type="Pfam" id="PF00015">
    <property type="entry name" value="MCPsignal"/>
    <property type="match status" value="1"/>
</dbReference>
<dbReference type="PRINTS" id="PR00260">
    <property type="entry name" value="CHEMTRNSDUCR"/>
</dbReference>
<dbReference type="SMART" id="SM00304">
    <property type="entry name" value="HAMP"/>
    <property type="match status" value="2"/>
</dbReference>
<dbReference type="SMART" id="SM00283">
    <property type="entry name" value="MA"/>
    <property type="match status" value="1"/>
</dbReference>
<dbReference type="SUPFAM" id="SSF58104">
    <property type="entry name" value="Methyl-accepting chemotaxis protein (MCP) signaling domain"/>
    <property type="match status" value="1"/>
</dbReference>
<dbReference type="PROSITE" id="PS50111">
    <property type="entry name" value="CHEMOTAXIS_TRANSDUC_2"/>
    <property type="match status" value="1"/>
</dbReference>
<dbReference type="PROSITE" id="PS50885">
    <property type="entry name" value="HAMP"/>
    <property type="match status" value="2"/>
</dbReference>
<reference key="1">
    <citation type="journal article" date="2000" name="Proc. Natl. Acad. Sci. U.S.A.">
        <title>Genome sequence of Halobacterium species NRC-1.</title>
        <authorList>
            <person name="Ng W.V."/>
            <person name="Kennedy S.P."/>
            <person name="Mahairas G.G."/>
            <person name="Berquist B."/>
            <person name="Pan M."/>
            <person name="Shukla H.D."/>
            <person name="Lasky S.R."/>
            <person name="Baliga N.S."/>
            <person name="Thorsson V."/>
            <person name="Sbrogna J."/>
            <person name="Swartzell S."/>
            <person name="Weir D."/>
            <person name="Hall J."/>
            <person name="Dahl T.A."/>
            <person name="Welti R."/>
            <person name="Goo Y.A."/>
            <person name="Leithauser B."/>
            <person name="Keller K."/>
            <person name="Cruz R."/>
            <person name="Danson M.J."/>
            <person name="Hough D.W."/>
            <person name="Maddocks D.G."/>
            <person name="Jablonski P.E."/>
            <person name="Krebs M.P."/>
            <person name="Angevine C.M."/>
            <person name="Dale H."/>
            <person name="Isenbarger T.A."/>
            <person name="Peck R.F."/>
            <person name="Pohlschroder M."/>
            <person name="Spudich J.L."/>
            <person name="Jung K.-H."/>
            <person name="Alam M."/>
            <person name="Freitas T."/>
            <person name="Hou S."/>
            <person name="Daniels C.J."/>
            <person name="Dennis P.P."/>
            <person name="Omer A.D."/>
            <person name="Ebhardt H."/>
            <person name="Lowe T.M."/>
            <person name="Liang P."/>
            <person name="Riley M."/>
            <person name="Hood L."/>
            <person name="DasSarma S."/>
        </authorList>
    </citation>
    <scope>NUCLEOTIDE SEQUENCE [LARGE SCALE GENOMIC DNA]</scope>
    <source>
        <strain>ATCC 700922 / JCM 11081 / NRC-1</strain>
    </source>
</reference>
<sequence length="778" mass="82077">MSIRSFAHRILRRALPGFVRRSYLAKFGVALLAVVVCISAAGGVMYLNTSEHLQQSSRTELKKAAELSSSAVDNWHDERTNNARMLAQYGVFDNDNATEVQQFFTDEQHHLPSDVRDIHYVSLTDARVITSTDAGLRNASFGSEAAPWSRQQLTPGDDGVFVSQPYVNDGITEVAYVARVSSTPGRRTAVVMTASLAAISSSFWDPTPHSFTQLVDGTGSVIADDSKRATRQPYVENATSPIVGARAVGFQPAAQAAKEMDQAHETAYAPVDGTPWVVTLHVPTSEAYGLASNMAENVLLILGIALAGLVFIALTLGRGTVRALNDLEAKAAALERGEYDTDLDVARVDELGRLFEAFASLRDTVQARIRDANEQQVDAEAARSEAEAAQADAEAAQAEAEAAREESEAQARRLETTAEAFSETMRAYAAGDLTVRLDADVEQAAMADIAAAFNEMAADMEATIADVVAFADEVATASTDASDSAAAVEQTGRDVSDAVGRIRDRAADQRDQLEAVASETDEMSATIEEVAASADQVAETSQRAAALGDDGQAAAQDAVAQLEEIEDETQAAATAVDDLEAKMSEIETIVAAITDIAEQTNMLALNANIEAARADQDGDGFAVVADEVKDLADESKASAAEIEALVAEVRAQTETSVAAMDRIQERVSDGVETVSETERSLSEIAGRIAEADTGVQEISNAMDDQAASVSDVTTAVGDVAALGEETATEAESTADAAAEQATTLSDVAAQTETLAEHAVALREHAAQFEVAADNEPGA</sequence>